<keyword id="KW-0030">Aminoacyl-tRNA synthetase</keyword>
<keyword id="KW-0067">ATP-binding</keyword>
<keyword id="KW-0963">Cytoplasm</keyword>
<keyword id="KW-0436">Ligase</keyword>
<keyword id="KW-0460">Magnesium</keyword>
<keyword id="KW-0479">Metal-binding</keyword>
<keyword id="KW-0547">Nucleotide-binding</keyword>
<keyword id="KW-0648">Protein biosynthesis</keyword>
<keyword id="KW-1185">Reference proteome</keyword>
<reference key="1">
    <citation type="journal article" date="2008" name="PLoS ONE">
        <title>Genome sequence of the saprophyte Leptospira biflexa provides insights into the evolution of Leptospira and the pathogenesis of leptospirosis.</title>
        <authorList>
            <person name="Picardeau M."/>
            <person name="Bulach D.M."/>
            <person name="Bouchier C."/>
            <person name="Zuerner R.L."/>
            <person name="Zidane N."/>
            <person name="Wilson P.J."/>
            <person name="Creno S."/>
            <person name="Kuczek E.S."/>
            <person name="Bommezzadri S."/>
            <person name="Davis J.C."/>
            <person name="McGrath A."/>
            <person name="Johnson M.J."/>
            <person name="Boursaux-Eude C."/>
            <person name="Seemann T."/>
            <person name="Rouy Z."/>
            <person name="Coppel R.L."/>
            <person name="Rood J.I."/>
            <person name="Lajus A."/>
            <person name="Davies J.K."/>
            <person name="Medigue C."/>
            <person name="Adler B."/>
        </authorList>
    </citation>
    <scope>NUCLEOTIDE SEQUENCE [LARGE SCALE GENOMIC DNA]</scope>
    <source>
        <strain>Patoc 1 / ATCC 23582 / Paris</strain>
    </source>
</reference>
<organism>
    <name type="scientific">Leptospira biflexa serovar Patoc (strain Patoc 1 / ATCC 23582 / Paris)</name>
    <dbReference type="NCBI Taxonomy" id="456481"/>
    <lineage>
        <taxon>Bacteria</taxon>
        <taxon>Pseudomonadati</taxon>
        <taxon>Spirochaetota</taxon>
        <taxon>Spirochaetia</taxon>
        <taxon>Leptospirales</taxon>
        <taxon>Leptospiraceae</taxon>
        <taxon>Leptospira</taxon>
    </lineage>
</organism>
<proteinExistence type="inferred from homology"/>
<evidence type="ECO:0000255" key="1">
    <source>
        <dbReference type="HAMAP-Rule" id="MF_00281"/>
    </source>
</evidence>
<name>SYFA_LEPBP</name>
<comment type="catalytic activity">
    <reaction evidence="1">
        <text>tRNA(Phe) + L-phenylalanine + ATP = L-phenylalanyl-tRNA(Phe) + AMP + diphosphate + H(+)</text>
        <dbReference type="Rhea" id="RHEA:19413"/>
        <dbReference type="Rhea" id="RHEA-COMP:9668"/>
        <dbReference type="Rhea" id="RHEA-COMP:9699"/>
        <dbReference type="ChEBI" id="CHEBI:15378"/>
        <dbReference type="ChEBI" id="CHEBI:30616"/>
        <dbReference type="ChEBI" id="CHEBI:33019"/>
        <dbReference type="ChEBI" id="CHEBI:58095"/>
        <dbReference type="ChEBI" id="CHEBI:78442"/>
        <dbReference type="ChEBI" id="CHEBI:78531"/>
        <dbReference type="ChEBI" id="CHEBI:456215"/>
        <dbReference type="EC" id="6.1.1.20"/>
    </reaction>
</comment>
<comment type="cofactor">
    <cofactor evidence="1">
        <name>Mg(2+)</name>
        <dbReference type="ChEBI" id="CHEBI:18420"/>
    </cofactor>
    <text evidence="1">Binds 2 magnesium ions per tetramer.</text>
</comment>
<comment type="subunit">
    <text evidence="1">Tetramer of two alpha and two beta subunits.</text>
</comment>
<comment type="subcellular location">
    <subcellularLocation>
        <location evidence="1">Cytoplasm</location>
    </subcellularLocation>
</comment>
<comment type="similarity">
    <text evidence="1">Belongs to the class-II aminoacyl-tRNA synthetase family. Phe-tRNA synthetase alpha subunit type 1 subfamily.</text>
</comment>
<feature type="chain" id="PRO_1000114887" description="Phenylalanine--tRNA ligase alpha subunit">
    <location>
        <begin position="1"/>
        <end position="341"/>
    </location>
</feature>
<feature type="binding site" evidence="1">
    <location>
        <position position="256"/>
    </location>
    <ligand>
        <name>Mg(2+)</name>
        <dbReference type="ChEBI" id="CHEBI:18420"/>
        <note>shared with beta subunit</note>
    </ligand>
</feature>
<protein>
    <recommendedName>
        <fullName evidence="1">Phenylalanine--tRNA ligase alpha subunit</fullName>
        <ecNumber evidence="1">6.1.1.20</ecNumber>
    </recommendedName>
    <alternativeName>
        <fullName evidence="1">Phenylalanyl-tRNA synthetase alpha subunit</fullName>
        <shortName evidence="1">PheRS</shortName>
    </alternativeName>
</protein>
<dbReference type="EC" id="6.1.1.20" evidence="1"/>
<dbReference type="EMBL" id="CP000786">
    <property type="protein sequence ID" value="ABZ96648.1"/>
    <property type="molecule type" value="Genomic_DNA"/>
</dbReference>
<dbReference type="RefSeq" id="WP_012387535.1">
    <property type="nucleotide sequence ID" value="NC_010602.1"/>
</dbReference>
<dbReference type="SMR" id="B0SJ52"/>
<dbReference type="STRING" id="456481.LEPBI_I0510"/>
<dbReference type="KEGG" id="lbi:LEPBI_I0510"/>
<dbReference type="HOGENOM" id="CLU_025086_0_1_12"/>
<dbReference type="OrthoDB" id="9800719at2"/>
<dbReference type="BioCyc" id="LBIF456481:LEPBI_RS02495-MONOMER"/>
<dbReference type="Proteomes" id="UP000001847">
    <property type="component" value="Chromosome I"/>
</dbReference>
<dbReference type="GO" id="GO:0005737">
    <property type="term" value="C:cytoplasm"/>
    <property type="evidence" value="ECO:0007669"/>
    <property type="project" value="UniProtKB-SubCell"/>
</dbReference>
<dbReference type="GO" id="GO:0005524">
    <property type="term" value="F:ATP binding"/>
    <property type="evidence" value="ECO:0007669"/>
    <property type="project" value="UniProtKB-UniRule"/>
</dbReference>
<dbReference type="GO" id="GO:0000287">
    <property type="term" value="F:magnesium ion binding"/>
    <property type="evidence" value="ECO:0007669"/>
    <property type="project" value="UniProtKB-UniRule"/>
</dbReference>
<dbReference type="GO" id="GO:0004826">
    <property type="term" value="F:phenylalanine-tRNA ligase activity"/>
    <property type="evidence" value="ECO:0007669"/>
    <property type="project" value="UniProtKB-UniRule"/>
</dbReference>
<dbReference type="GO" id="GO:0000049">
    <property type="term" value="F:tRNA binding"/>
    <property type="evidence" value="ECO:0007669"/>
    <property type="project" value="InterPro"/>
</dbReference>
<dbReference type="GO" id="GO:0006432">
    <property type="term" value="P:phenylalanyl-tRNA aminoacylation"/>
    <property type="evidence" value="ECO:0007669"/>
    <property type="project" value="UniProtKB-UniRule"/>
</dbReference>
<dbReference type="CDD" id="cd00496">
    <property type="entry name" value="PheRS_alpha_core"/>
    <property type="match status" value="1"/>
</dbReference>
<dbReference type="FunFam" id="3.30.930.10:FF:000089">
    <property type="entry name" value="Phenylalanine--tRNA ligase alpha subunit"/>
    <property type="match status" value="1"/>
</dbReference>
<dbReference type="Gene3D" id="3.30.930.10">
    <property type="entry name" value="Bira Bifunctional Protein, Domain 2"/>
    <property type="match status" value="1"/>
</dbReference>
<dbReference type="HAMAP" id="MF_00281">
    <property type="entry name" value="Phe_tRNA_synth_alpha1"/>
    <property type="match status" value="1"/>
</dbReference>
<dbReference type="InterPro" id="IPR006195">
    <property type="entry name" value="aa-tRNA-synth_II"/>
</dbReference>
<dbReference type="InterPro" id="IPR045864">
    <property type="entry name" value="aa-tRNA-synth_II/BPL/LPL"/>
</dbReference>
<dbReference type="InterPro" id="IPR004529">
    <property type="entry name" value="Phe-tRNA-synth_IIc_asu"/>
</dbReference>
<dbReference type="InterPro" id="IPR004188">
    <property type="entry name" value="Phe-tRNA_ligase_II_N"/>
</dbReference>
<dbReference type="InterPro" id="IPR022911">
    <property type="entry name" value="Phe_tRNA_ligase_alpha1_bac"/>
</dbReference>
<dbReference type="InterPro" id="IPR002319">
    <property type="entry name" value="Phenylalanyl-tRNA_Synthase"/>
</dbReference>
<dbReference type="InterPro" id="IPR010978">
    <property type="entry name" value="tRNA-bd_arm"/>
</dbReference>
<dbReference type="NCBIfam" id="TIGR00468">
    <property type="entry name" value="pheS"/>
    <property type="match status" value="1"/>
</dbReference>
<dbReference type="PANTHER" id="PTHR11538:SF41">
    <property type="entry name" value="PHENYLALANINE--TRNA LIGASE, MITOCHONDRIAL"/>
    <property type="match status" value="1"/>
</dbReference>
<dbReference type="PANTHER" id="PTHR11538">
    <property type="entry name" value="PHENYLALANYL-TRNA SYNTHETASE"/>
    <property type="match status" value="1"/>
</dbReference>
<dbReference type="Pfam" id="PF02912">
    <property type="entry name" value="Phe_tRNA-synt_N"/>
    <property type="match status" value="1"/>
</dbReference>
<dbReference type="Pfam" id="PF01409">
    <property type="entry name" value="tRNA-synt_2d"/>
    <property type="match status" value="1"/>
</dbReference>
<dbReference type="SUPFAM" id="SSF55681">
    <property type="entry name" value="Class II aaRS and biotin synthetases"/>
    <property type="match status" value="1"/>
</dbReference>
<dbReference type="SUPFAM" id="SSF46589">
    <property type="entry name" value="tRNA-binding arm"/>
    <property type="match status" value="1"/>
</dbReference>
<dbReference type="PROSITE" id="PS50862">
    <property type="entry name" value="AA_TRNA_LIGASE_II"/>
    <property type="match status" value="1"/>
</dbReference>
<gene>
    <name evidence="1" type="primary">pheS</name>
    <name type="ordered locus">LEPBI_I0510</name>
</gene>
<accession>B0SJ52</accession>
<sequence length="341" mass="38568">MSLSQEIVSLVKEAETVLSSATTEQELDALKNQFLGKKGKLTSVLKGLASLTVEEKKTVGKEANEAQTKLEQFVEAKRTILKESFYENQLGKESFDTLRPLPKKERGSLHPISQIQYEIEDIFTSMGFSVMDGPEVETDENNFGALNFTEDHPARDMQDTFYTVDGNLLRTHTSAIQVRALRKLKPPFRIIAPGRVFRYEEVDASHENTFYQVEGMVVGENISVAHLIYTMETLLSRVFRKEIKTRLRPGYFPFVEPGFELDINCLVCSGDGCSVCKQSGWLELLPCGLVHPNVLEAAGLDSKKWTGFAFGLGLDRLVMMRYGIHDIRYFQSGNLRFLKQF</sequence>